<reference key="1">
    <citation type="journal article" date="2002" name="Proc. Natl. Acad. Sci. U.S.A.">
        <title>The Brucella suis genome reveals fundamental similarities between animal and plant pathogens and symbionts.</title>
        <authorList>
            <person name="Paulsen I.T."/>
            <person name="Seshadri R."/>
            <person name="Nelson K.E."/>
            <person name="Eisen J.A."/>
            <person name="Heidelberg J.F."/>
            <person name="Read T.D."/>
            <person name="Dodson R.J."/>
            <person name="Umayam L.A."/>
            <person name="Brinkac L.M."/>
            <person name="Beanan M.J."/>
            <person name="Daugherty S.C."/>
            <person name="DeBoy R.T."/>
            <person name="Durkin A.S."/>
            <person name="Kolonay J.F."/>
            <person name="Madupu R."/>
            <person name="Nelson W.C."/>
            <person name="Ayodeji B."/>
            <person name="Kraul M."/>
            <person name="Shetty J."/>
            <person name="Malek J.A."/>
            <person name="Van Aken S.E."/>
            <person name="Riedmuller S."/>
            <person name="Tettelin H."/>
            <person name="Gill S.R."/>
            <person name="White O."/>
            <person name="Salzberg S.L."/>
            <person name="Hoover D.L."/>
            <person name="Lindler L.E."/>
            <person name="Halling S.M."/>
            <person name="Boyle S.M."/>
            <person name="Fraser C.M."/>
        </authorList>
    </citation>
    <scope>NUCLEOTIDE SEQUENCE [LARGE SCALE GENOMIC DNA]</scope>
    <source>
        <strain>1330</strain>
    </source>
</reference>
<reference key="2">
    <citation type="journal article" date="2011" name="J. Bacteriol.">
        <title>Revised genome sequence of Brucella suis 1330.</title>
        <authorList>
            <person name="Tae H."/>
            <person name="Shallom S."/>
            <person name="Settlage R."/>
            <person name="Preston D."/>
            <person name="Adams L.G."/>
            <person name="Garner H.R."/>
        </authorList>
    </citation>
    <scope>NUCLEOTIDE SEQUENCE [LARGE SCALE GENOMIC DNA]</scope>
    <source>
        <strain>1330</strain>
    </source>
</reference>
<gene>
    <name evidence="1" type="primary">pyrH</name>
    <name type="ordered locus">BR1160</name>
    <name type="ordered locus">BS1330_I1156</name>
</gene>
<protein>
    <recommendedName>
        <fullName evidence="1">Uridylate kinase</fullName>
        <shortName evidence="1">UK</shortName>
        <ecNumber evidence="1">2.7.4.22</ecNumber>
    </recommendedName>
    <alternativeName>
        <fullName evidence="1">Uridine monophosphate kinase</fullName>
        <shortName evidence="1">UMP kinase</shortName>
        <shortName evidence="1">UMPK</shortName>
    </alternativeName>
</protein>
<proteinExistence type="inferred from homology"/>
<feature type="chain" id="PRO_0000143828" description="Uridylate kinase">
    <location>
        <begin position="1"/>
        <end position="240"/>
    </location>
</feature>
<feature type="region of interest" description="Involved in allosteric activation by GTP" evidence="1">
    <location>
        <begin position="21"/>
        <end position="26"/>
    </location>
</feature>
<feature type="binding site" evidence="1">
    <location>
        <begin position="13"/>
        <end position="16"/>
    </location>
    <ligand>
        <name>ATP</name>
        <dbReference type="ChEBI" id="CHEBI:30616"/>
    </ligand>
</feature>
<feature type="binding site" evidence="1">
    <location>
        <position position="55"/>
    </location>
    <ligand>
        <name>UMP</name>
        <dbReference type="ChEBI" id="CHEBI:57865"/>
    </ligand>
</feature>
<feature type="binding site" evidence="1">
    <location>
        <position position="56"/>
    </location>
    <ligand>
        <name>ATP</name>
        <dbReference type="ChEBI" id="CHEBI:30616"/>
    </ligand>
</feature>
<feature type="binding site" evidence="1">
    <location>
        <position position="60"/>
    </location>
    <ligand>
        <name>ATP</name>
        <dbReference type="ChEBI" id="CHEBI:30616"/>
    </ligand>
</feature>
<feature type="binding site" evidence="1">
    <location>
        <position position="75"/>
    </location>
    <ligand>
        <name>UMP</name>
        <dbReference type="ChEBI" id="CHEBI:57865"/>
    </ligand>
</feature>
<feature type="binding site" evidence="1">
    <location>
        <begin position="136"/>
        <end position="143"/>
    </location>
    <ligand>
        <name>UMP</name>
        <dbReference type="ChEBI" id="CHEBI:57865"/>
    </ligand>
</feature>
<feature type="binding site" evidence="1">
    <location>
        <position position="163"/>
    </location>
    <ligand>
        <name>ATP</name>
        <dbReference type="ChEBI" id="CHEBI:30616"/>
    </ligand>
</feature>
<feature type="binding site" evidence="1">
    <location>
        <position position="164"/>
    </location>
    <ligand>
        <name>ATP</name>
        <dbReference type="ChEBI" id="CHEBI:30616"/>
    </ligand>
</feature>
<feature type="binding site" evidence="1">
    <location>
        <position position="169"/>
    </location>
    <ligand>
        <name>ATP</name>
        <dbReference type="ChEBI" id="CHEBI:30616"/>
    </ligand>
</feature>
<feature type="binding site" evidence="1">
    <location>
        <position position="172"/>
    </location>
    <ligand>
        <name>ATP</name>
        <dbReference type="ChEBI" id="CHEBI:30616"/>
    </ligand>
</feature>
<keyword id="KW-0021">Allosteric enzyme</keyword>
<keyword id="KW-0067">ATP-binding</keyword>
<keyword id="KW-0963">Cytoplasm</keyword>
<keyword id="KW-0418">Kinase</keyword>
<keyword id="KW-0547">Nucleotide-binding</keyword>
<keyword id="KW-0665">Pyrimidine biosynthesis</keyword>
<keyword id="KW-0808">Transferase</keyword>
<name>PYRH_BRUSU</name>
<comment type="function">
    <text evidence="1">Catalyzes the reversible phosphorylation of UMP to UDP.</text>
</comment>
<comment type="catalytic activity">
    <reaction evidence="1">
        <text>UMP + ATP = UDP + ADP</text>
        <dbReference type="Rhea" id="RHEA:24400"/>
        <dbReference type="ChEBI" id="CHEBI:30616"/>
        <dbReference type="ChEBI" id="CHEBI:57865"/>
        <dbReference type="ChEBI" id="CHEBI:58223"/>
        <dbReference type="ChEBI" id="CHEBI:456216"/>
        <dbReference type="EC" id="2.7.4.22"/>
    </reaction>
</comment>
<comment type="activity regulation">
    <text evidence="1">Allosterically activated by GTP. Inhibited by UTP.</text>
</comment>
<comment type="pathway">
    <text evidence="1">Pyrimidine metabolism; CTP biosynthesis via de novo pathway; UDP from UMP (UMPK route): step 1/1.</text>
</comment>
<comment type="subunit">
    <text evidence="1">Homohexamer.</text>
</comment>
<comment type="subcellular location">
    <subcellularLocation>
        <location evidence="1">Cytoplasm</location>
    </subcellularLocation>
</comment>
<comment type="similarity">
    <text evidence="1">Belongs to the UMP kinase family.</text>
</comment>
<comment type="sequence caution" evidence="2">
    <conflict type="erroneous initiation">
        <sequence resource="EMBL-CDS" id="AAN30080"/>
    </conflict>
</comment>
<organism>
    <name type="scientific">Brucella suis biovar 1 (strain 1330)</name>
    <dbReference type="NCBI Taxonomy" id="204722"/>
    <lineage>
        <taxon>Bacteria</taxon>
        <taxon>Pseudomonadati</taxon>
        <taxon>Pseudomonadota</taxon>
        <taxon>Alphaproteobacteria</taxon>
        <taxon>Hyphomicrobiales</taxon>
        <taxon>Brucellaceae</taxon>
        <taxon>Brucella/Ochrobactrum group</taxon>
        <taxon>Brucella</taxon>
    </lineage>
</organism>
<evidence type="ECO:0000255" key="1">
    <source>
        <dbReference type="HAMAP-Rule" id="MF_01220"/>
    </source>
</evidence>
<evidence type="ECO:0000305" key="2"/>
<sequence length="240" mass="25064">MTGKPAYKRVLLKASGEALMGSQGFGIDVSVADRIANDIKQARALGVEVGVVIGGGNIFRGVAVASKGGDRVTGDHMGMLATVINSLALRTSLHKIGVDSVVLSAIAMPEICESFSQRQATAYMDEGKVVIFAGGTGNPFFTTDSAAALRAAEIEADALLKGTQVDGIYSADPKKDPGATRFDQLTHKEFLDRGLAVMDTAAVALARENNIPIIVYSIHENGGLADILQGKGRCTIVSDN</sequence>
<accession>Q8G0D7</accession>
<accession>G0KA82</accession>
<dbReference type="EC" id="2.7.4.22" evidence="1"/>
<dbReference type="EMBL" id="AE014291">
    <property type="protein sequence ID" value="AAN30080.1"/>
    <property type="status" value="ALT_INIT"/>
    <property type="molecule type" value="Genomic_DNA"/>
</dbReference>
<dbReference type="EMBL" id="CP002997">
    <property type="protein sequence ID" value="AEM18498.1"/>
    <property type="molecule type" value="Genomic_DNA"/>
</dbReference>
<dbReference type="RefSeq" id="WP_006190487.1">
    <property type="nucleotide sequence ID" value="NZ_KN046804.1"/>
</dbReference>
<dbReference type="SMR" id="Q8G0D7"/>
<dbReference type="GeneID" id="45052201"/>
<dbReference type="KEGG" id="bms:BR1160"/>
<dbReference type="KEGG" id="bsi:BS1330_I1156"/>
<dbReference type="PATRIC" id="fig|204722.21.peg.1956"/>
<dbReference type="HOGENOM" id="CLU_033861_0_0_5"/>
<dbReference type="PhylomeDB" id="Q8G0D7"/>
<dbReference type="UniPathway" id="UPA00159">
    <property type="reaction ID" value="UER00275"/>
</dbReference>
<dbReference type="Proteomes" id="UP000007104">
    <property type="component" value="Chromosome I"/>
</dbReference>
<dbReference type="GO" id="GO:0005829">
    <property type="term" value="C:cytosol"/>
    <property type="evidence" value="ECO:0007669"/>
    <property type="project" value="TreeGrafter"/>
</dbReference>
<dbReference type="GO" id="GO:0005524">
    <property type="term" value="F:ATP binding"/>
    <property type="evidence" value="ECO:0007669"/>
    <property type="project" value="UniProtKB-KW"/>
</dbReference>
<dbReference type="GO" id="GO:0033862">
    <property type="term" value="F:UMP kinase activity"/>
    <property type="evidence" value="ECO:0007669"/>
    <property type="project" value="UniProtKB-EC"/>
</dbReference>
<dbReference type="GO" id="GO:0044210">
    <property type="term" value="P:'de novo' CTP biosynthetic process"/>
    <property type="evidence" value="ECO:0007669"/>
    <property type="project" value="UniProtKB-UniRule"/>
</dbReference>
<dbReference type="GO" id="GO:0006225">
    <property type="term" value="P:UDP biosynthetic process"/>
    <property type="evidence" value="ECO:0007669"/>
    <property type="project" value="TreeGrafter"/>
</dbReference>
<dbReference type="CDD" id="cd04254">
    <property type="entry name" value="AAK_UMPK-PyrH-Ec"/>
    <property type="match status" value="1"/>
</dbReference>
<dbReference type="FunFam" id="3.40.1160.10:FF:000001">
    <property type="entry name" value="Uridylate kinase"/>
    <property type="match status" value="1"/>
</dbReference>
<dbReference type="Gene3D" id="3.40.1160.10">
    <property type="entry name" value="Acetylglutamate kinase-like"/>
    <property type="match status" value="1"/>
</dbReference>
<dbReference type="HAMAP" id="MF_01220_B">
    <property type="entry name" value="PyrH_B"/>
    <property type="match status" value="1"/>
</dbReference>
<dbReference type="InterPro" id="IPR036393">
    <property type="entry name" value="AceGlu_kinase-like_sf"/>
</dbReference>
<dbReference type="InterPro" id="IPR001048">
    <property type="entry name" value="Asp/Glu/Uridylate_kinase"/>
</dbReference>
<dbReference type="InterPro" id="IPR011817">
    <property type="entry name" value="Uridylate_kinase"/>
</dbReference>
<dbReference type="InterPro" id="IPR015963">
    <property type="entry name" value="Uridylate_kinase_bac"/>
</dbReference>
<dbReference type="NCBIfam" id="TIGR02075">
    <property type="entry name" value="pyrH_bact"/>
    <property type="match status" value="1"/>
</dbReference>
<dbReference type="PANTHER" id="PTHR42833">
    <property type="entry name" value="URIDYLATE KINASE"/>
    <property type="match status" value="1"/>
</dbReference>
<dbReference type="PANTHER" id="PTHR42833:SF4">
    <property type="entry name" value="URIDYLATE KINASE PUMPKIN, CHLOROPLASTIC"/>
    <property type="match status" value="1"/>
</dbReference>
<dbReference type="Pfam" id="PF00696">
    <property type="entry name" value="AA_kinase"/>
    <property type="match status" value="1"/>
</dbReference>
<dbReference type="PIRSF" id="PIRSF005650">
    <property type="entry name" value="Uridylate_kin"/>
    <property type="match status" value="1"/>
</dbReference>
<dbReference type="SUPFAM" id="SSF53633">
    <property type="entry name" value="Carbamate kinase-like"/>
    <property type="match status" value="1"/>
</dbReference>